<name>GLMM_LEGPC</name>
<evidence type="ECO:0000255" key="1">
    <source>
        <dbReference type="HAMAP-Rule" id="MF_01554"/>
    </source>
</evidence>
<protein>
    <recommendedName>
        <fullName evidence="1">Phosphoglucosamine mutase</fullName>
        <ecNumber evidence="1">5.4.2.10</ecNumber>
    </recommendedName>
</protein>
<proteinExistence type="inferred from homology"/>
<organism>
    <name type="scientific">Legionella pneumophila (strain Corby)</name>
    <dbReference type="NCBI Taxonomy" id="400673"/>
    <lineage>
        <taxon>Bacteria</taxon>
        <taxon>Pseudomonadati</taxon>
        <taxon>Pseudomonadota</taxon>
        <taxon>Gammaproteobacteria</taxon>
        <taxon>Legionellales</taxon>
        <taxon>Legionellaceae</taxon>
        <taxon>Legionella</taxon>
    </lineage>
</organism>
<keyword id="KW-0413">Isomerase</keyword>
<keyword id="KW-0460">Magnesium</keyword>
<keyword id="KW-0479">Metal-binding</keyword>
<keyword id="KW-0597">Phosphoprotein</keyword>
<accession>A5IHW7</accession>
<gene>
    <name evidence="1" type="primary">glmM</name>
    <name type="ordered locus">LPC_3080</name>
</gene>
<comment type="function">
    <text evidence="1">Catalyzes the conversion of glucosamine-6-phosphate to glucosamine-1-phosphate.</text>
</comment>
<comment type="catalytic activity">
    <reaction evidence="1">
        <text>alpha-D-glucosamine 1-phosphate = D-glucosamine 6-phosphate</text>
        <dbReference type="Rhea" id="RHEA:23424"/>
        <dbReference type="ChEBI" id="CHEBI:58516"/>
        <dbReference type="ChEBI" id="CHEBI:58725"/>
        <dbReference type="EC" id="5.4.2.10"/>
    </reaction>
</comment>
<comment type="cofactor">
    <cofactor evidence="1">
        <name>Mg(2+)</name>
        <dbReference type="ChEBI" id="CHEBI:18420"/>
    </cofactor>
    <text evidence="1">Binds 1 Mg(2+) ion per subunit.</text>
</comment>
<comment type="PTM">
    <text evidence="1">Activated by phosphorylation.</text>
</comment>
<comment type="similarity">
    <text evidence="1">Belongs to the phosphohexose mutase family.</text>
</comment>
<feature type="chain" id="PRO_0000305648" description="Phosphoglucosamine mutase">
    <location>
        <begin position="1"/>
        <end position="455"/>
    </location>
</feature>
<feature type="active site" description="Phosphoserine intermediate" evidence="1">
    <location>
        <position position="102"/>
    </location>
</feature>
<feature type="binding site" description="via phosphate group" evidence="1">
    <location>
        <position position="102"/>
    </location>
    <ligand>
        <name>Mg(2+)</name>
        <dbReference type="ChEBI" id="CHEBI:18420"/>
    </ligand>
</feature>
<feature type="binding site" evidence="1">
    <location>
        <position position="241"/>
    </location>
    <ligand>
        <name>Mg(2+)</name>
        <dbReference type="ChEBI" id="CHEBI:18420"/>
    </ligand>
</feature>
<feature type="binding site" evidence="1">
    <location>
        <position position="243"/>
    </location>
    <ligand>
        <name>Mg(2+)</name>
        <dbReference type="ChEBI" id="CHEBI:18420"/>
    </ligand>
</feature>
<feature type="binding site" evidence="1">
    <location>
        <position position="245"/>
    </location>
    <ligand>
        <name>Mg(2+)</name>
        <dbReference type="ChEBI" id="CHEBI:18420"/>
    </ligand>
</feature>
<feature type="modified residue" description="Phosphoserine" evidence="1">
    <location>
        <position position="102"/>
    </location>
</feature>
<reference key="1">
    <citation type="submission" date="2006-11" db="EMBL/GenBank/DDBJ databases">
        <title>Identification and characterization of a new conjugation/ type IVA secretion system (trb/tra) of L. pneumophila Corby localized on a mobile genomic island.</title>
        <authorList>
            <person name="Gloeckner G."/>
            <person name="Albert-Weissenberger C."/>
            <person name="Weinmann E."/>
            <person name="Jacobi S."/>
            <person name="Schunder E."/>
            <person name="Steinert M."/>
            <person name="Buchrieser C."/>
            <person name="Hacker J."/>
            <person name="Heuner K."/>
        </authorList>
    </citation>
    <scope>NUCLEOTIDE SEQUENCE [LARGE SCALE GENOMIC DNA]</scope>
    <source>
        <strain>Corby</strain>
    </source>
</reference>
<dbReference type="EC" id="5.4.2.10" evidence="1"/>
<dbReference type="EMBL" id="CP000675">
    <property type="protein sequence ID" value="ABQ56967.1"/>
    <property type="molecule type" value="Genomic_DNA"/>
</dbReference>
<dbReference type="RefSeq" id="WP_011947681.1">
    <property type="nucleotide sequence ID" value="NZ_JAPMSS010000004.1"/>
</dbReference>
<dbReference type="SMR" id="A5IHW7"/>
<dbReference type="KEGG" id="lpc:LPC_3080"/>
<dbReference type="HOGENOM" id="CLU_016950_7_0_6"/>
<dbReference type="GO" id="GO:0005829">
    <property type="term" value="C:cytosol"/>
    <property type="evidence" value="ECO:0007669"/>
    <property type="project" value="TreeGrafter"/>
</dbReference>
<dbReference type="GO" id="GO:0000287">
    <property type="term" value="F:magnesium ion binding"/>
    <property type="evidence" value="ECO:0007669"/>
    <property type="project" value="UniProtKB-UniRule"/>
</dbReference>
<dbReference type="GO" id="GO:0008966">
    <property type="term" value="F:phosphoglucosamine mutase activity"/>
    <property type="evidence" value="ECO:0007669"/>
    <property type="project" value="UniProtKB-UniRule"/>
</dbReference>
<dbReference type="GO" id="GO:0004615">
    <property type="term" value="F:phosphomannomutase activity"/>
    <property type="evidence" value="ECO:0007669"/>
    <property type="project" value="TreeGrafter"/>
</dbReference>
<dbReference type="GO" id="GO:0005975">
    <property type="term" value="P:carbohydrate metabolic process"/>
    <property type="evidence" value="ECO:0007669"/>
    <property type="project" value="InterPro"/>
</dbReference>
<dbReference type="GO" id="GO:0009252">
    <property type="term" value="P:peptidoglycan biosynthetic process"/>
    <property type="evidence" value="ECO:0007669"/>
    <property type="project" value="TreeGrafter"/>
</dbReference>
<dbReference type="GO" id="GO:0006048">
    <property type="term" value="P:UDP-N-acetylglucosamine biosynthetic process"/>
    <property type="evidence" value="ECO:0007669"/>
    <property type="project" value="TreeGrafter"/>
</dbReference>
<dbReference type="CDD" id="cd05802">
    <property type="entry name" value="GlmM"/>
    <property type="match status" value="1"/>
</dbReference>
<dbReference type="FunFam" id="3.30.310.50:FF:000001">
    <property type="entry name" value="Phosphoglucosamine mutase"/>
    <property type="match status" value="1"/>
</dbReference>
<dbReference type="FunFam" id="3.40.120.10:FF:000001">
    <property type="entry name" value="Phosphoglucosamine mutase"/>
    <property type="match status" value="1"/>
</dbReference>
<dbReference type="FunFam" id="3.40.120.10:FF:000002">
    <property type="entry name" value="Phosphoglucosamine mutase"/>
    <property type="match status" value="1"/>
</dbReference>
<dbReference type="Gene3D" id="3.40.120.10">
    <property type="entry name" value="Alpha-D-Glucose-1,6-Bisphosphate, subunit A, domain 3"/>
    <property type="match status" value="3"/>
</dbReference>
<dbReference type="Gene3D" id="3.30.310.50">
    <property type="entry name" value="Alpha-D-phosphohexomutase, C-terminal domain"/>
    <property type="match status" value="1"/>
</dbReference>
<dbReference type="HAMAP" id="MF_01554_B">
    <property type="entry name" value="GlmM_B"/>
    <property type="match status" value="1"/>
</dbReference>
<dbReference type="InterPro" id="IPR005844">
    <property type="entry name" value="A-D-PHexomutase_a/b/a-I"/>
</dbReference>
<dbReference type="InterPro" id="IPR016055">
    <property type="entry name" value="A-D-PHexomutase_a/b/a-I/II/III"/>
</dbReference>
<dbReference type="InterPro" id="IPR005845">
    <property type="entry name" value="A-D-PHexomutase_a/b/a-II"/>
</dbReference>
<dbReference type="InterPro" id="IPR005846">
    <property type="entry name" value="A-D-PHexomutase_a/b/a-III"/>
</dbReference>
<dbReference type="InterPro" id="IPR005843">
    <property type="entry name" value="A-D-PHexomutase_C"/>
</dbReference>
<dbReference type="InterPro" id="IPR036900">
    <property type="entry name" value="A-D-PHexomutase_C_sf"/>
</dbReference>
<dbReference type="InterPro" id="IPR005841">
    <property type="entry name" value="Alpha-D-phosphohexomutase_SF"/>
</dbReference>
<dbReference type="InterPro" id="IPR006352">
    <property type="entry name" value="GlmM_bact"/>
</dbReference>
<dbReference type="InterPro" id="IPR050060">
    <property type="entry name" value="Phosphoglucosamine_mutase"/>
</dbReference>
<dbReference type="NCBIfam" id="TIGR01455">
    <property type="entry name" value="glmM"/>
    <property type="match status" value="1"/>
</dbReference>
<dbReference type="NCBIfam" id="NF008139">
    <property type="entry name" value="PRK10887.1"/>
    <property type="match status" value="1"/>
</dbReference>
<dbReference type="PANTHER" id="PTHR42946:SF1">
    <property type="entry name" value="PHOSPHOGLUCOMUTASE (ALPHA-D-GLUCOSE-1,6-BISPHOSPHATE-DEPENDENT)"/>
    <property type="match status" value="1"/>
</dbReference>
<dbReference type="PANTHER" id="PTHR42946">
    <property type="entry name" value="PHOSPHOHEXOSE MUTASE"/>
    <property type="match status" value="1"/>
</dbReference>
<dbReference type="Pfam" id="PF02878">
    <property type="entry name" value="PGM_PMM_I"/>
    <property type="match status" value="1"/>
</dbReference>
<dbReference type="Pfam" id="PF02879">
    <property type="entry name" value="PGM_PMM_II"/>
    <property type="match status" value="1"/>
</dbReference>
<dbReference type="Pfam" id="PF02880">
    <property type="entry name" value="PGM_PMM_III"/>
    <property type="match status" value="1"/>
</dbReference>
<dbReference type="Pfam" id="PF00408">
    <property type="entry name" value="PGM_PMM_IV"/>
    <property type="match status" value="1"/>
</dbReference>
<dbReference type="PRINTS" id="PR00509">
    <property type="entry name" value="PGMPMM"/>
</dbReference>
<dbReference type="SUPFAM" id="SSF55957">
    <property type="entry name" value="Phosphoglucomutase, C-terminal domain"/>
    <property type="match status" value="1"/>
</dbReference>
<dbReference type="SUPFAM" id="SSF53738">
    <property type="entry name" value="Phosphoglucomutase, first 3 domains"/>
    <property type="match status" value="3"/>
</dbReference>
<sequence>MSQRKYFGTDGIRGHVGLSNINPEFVLKLGWAVGCVLANGARKKVVIGKDTRVSGYMLESALEAGLSAAGVDVALLGPMPTPGIAYLTQTLRANAGIVISASHNLFEDNGIKFFSADGGKLPDSVELAIEAQLEKQLQTVPSVKLGKATRINDAAGRYIEFCKSTIPSLSRLSNLKIVVDCANGATYHIAPNVFSELGADVVPIGIKPDGFNINQECGSTAPELLREKVIAVGADIGIGLDGDGDRVILVDSLGNLVDGDQIIYIIAKDRHQRGVLHGGVVGTLMSNYGLELAITSLGVPFQRSKVGDRYVLETLREKDWKIGGETSGHIVCLDKTTTGDGIVAALQVLSIMVKQNKALHELTAGIQLLPQTLVNLKTNNAALLASNPDVIQAVKNLEKHLNGEGRVLLRPSGTEPLLRVMVEGANASIVKQQAQMLCDDISQIDKKLTESLPST</sequence>